<reference key="1">
    <citation type="journal article" date="1986" name="Proc. Natl. Acad. Sci. U.S.A.">
        <title>Homologous ribosomal proteins in bacteria, yeast, and humans.</title>
        <authorList>
            <person name="Chen I.-T."/>
            <person name="Dixit A."/>
            <person name="Rhoads D.D."/>
            <person name="Roufa D.J."/>
        </authorList>
    </citation>
    <scope>NUCLEOTIDE SEQUENCE [GENOMIC DNA]</scope>
</reference>
<reference key="2">
    <citation type="journal article" date="1986" name="Mol. Cell. Biol.">
        <title>Primary structure of human ribosomal protein S14 and the gene that encodes it.</title>
        <authorList>
            <person name="Rhoads D.D."/>
            <person name="Dixit A."/>
            <person name="Roufa D.J."/>
        </authorList>
    </citation>
    <scope>NUCLEOTIDE SEQUENCE [GENOMIC DNA]</scope>
</reference>
<reference key="3">
    <citation type="submission" date="1998-12" db="EMBL/GenBank/DDBJ databases">
        <title>Functional prediction of the coding sequences of 121 new genes deduced by analysis of cDNA clones from human fetal liver.</title>
        <authorList>
            <person name="Zhang C."/>
            <person name="Yu Y."/>
            <person name="Zhang S."/>
            <person name="Wei H."/>
            <person name="Zhou G."/>
            <person name="Ouyang S."/>
            <person name="Luo L."/>
            <person name="Bi J."/>
            <person name="Liu M."/>
            <person name="He F."/>
        </authorList>
    </citation>
    <scope>NUCLEOTIDE SEQUENCE [LARGE SCALE MRNA]</scope>
    <source>
        <tissue>Fetal liver</tissue>
    </source>
</reference>
<reference key="4">
    <citation type="journal article" date="2004" name="Nat. Genet.">
        <title>Complete sequencing and characterization of 21,243 full-length human cDNAs.</title>
        <authorList>
            <person name="Ota T."/>
            <person name="Suzuki Y."/>
            <person name="Nishikawa T."/>
            <person name="Otsuki T."/>
            <person name="Sugiyama T."/>
            <person name="Irie R."/>
            <person name="Wakamatsu A."/>
            <person name="Hayashi K."/>
            <person name="Sato H."/>
            <person name="Nagai K."/>
            <person name="Kimura K."/>
            <person name="Makita H."/>
            <person name="Sekine M."/>
            <person name="Obayashi M."/>
            <person name="Nishi T."/>
            <person name="Shibahara T."/>
            <person name="Tanaka T."/>
            <person name="Ishii S."/>
            <person name="Yamamoto J."/>
            <person name="Saito K."/>
            <person name="Kawai Y."/>
            <person name="Isono Y."/>
            <person name="Nakamura Y."/>
            <person name="Nagahari K."/>
            <person name="Murakami K."/>
            <person name="Yasuda T."/>
            <person name="Iwayanagi T."/>
            <person name="Wagatsuma M."/>
            <person name="Shiratori A."/>
            <person name="Sudo H."/>
            <person name="Hosoiri T."/>
            <person name="Kaku Y."/>
            <person name="Kodaira H."/>
            <person name="Kondo H."/>
            <person name="Sugawara M."/>
            <person name="Takahashi M."/>
            <person name="Kanda K."/>
            <person name="Yokoi T."/>
            <person name="Furuya T."/>
            <person name="Kikkawa E."/>
            <person name="Omura Y."/>
            <person name="Abe K."/>
            <person name="Kamihara K."/>
            <person name="Katsuta N."/>
            <person name="Sato K."/>
            <person name="Tanikawa M."/>
            <person name="Yamazaki M."/>
            <person name="Ninomiya K."/>
            <person name="Ishibashi T."/>
            <person name="Yamashita H."/>
            <person name="Murakawa K."/>
            <person name="Fujimori K."/>
            <person name="Tanai H."/>
            <person name="Kimata M."/>
            <person name="Watanabe M."/>
            <person name="Hiraoka S."/>
            <person name="Chiba Y."/>
            <person name="Ishida S."/>
            <person name="Ono Y."/>
            <person name="Takiguchi S."/>
            <person name="Watanabe S."/>
            <person name="Yosida M."/>
            <person name="Hotuta T."/>
            <person name="Kusano J."/>
            <person name="Kanehori K."/>
            <person name="Takahashi-Fujii A."/>
            <person name="Hara H."/>
            <person name="Tanase T.-O."/>
            <person name="Nomura Y."/>
            <person name="Togiya S."/>
            <person name="Komai F."/>
            <person name="Hara R."/>
            <person name="Takeuchi K."/>
            <person name="Arita M."/>
            <person name="Imose N."/>
            <person name="Musashino K."/>
            <person name="Yuuki H."/>
            <person name="Oshima A."/>
            <person name="Sasaki N."/>
            <person name="Aotsuka S."/>
            <person name="Yoshikawa Y."/>
            <person name="Matsunawa H."/>
            <person name="Ichihara T."/>
            <person name="Shiohata N."/>
            <person name="Sano S."/>
            <person name="Moriya S."/>
            <person name="Momiyama H."/>
            <person name="Satoh N."/>
            <person name="Takami S."/>
            <person name="Terashima Y."/>
            <person name="Suzuki O."/>
            <person name="Nakagawa S."/>
            <person name="Senoh A."/>
            <person name="Mizoguchi H."/>
            <person name="Goto Y."/>
            <person name="Shimizu F."/>
            <person name="Wakebe H."/>
            <person name="Hishigaki H."/>
            <person name="Watanabe T."/>
            <person name="Sugiyama A."/>
            <person name="Takemoto M."/>
            <person name="Kawakami B."/>
            <person name="Yamazaki M."/>
            <person name="Watanabe K."/>
            <person name="Kumagai A."/>
            <person name="Itakura S."/>
            <person name="Fukuzumi Y."/>
            <person name="Fujimori Y."/>
            <person name="Komiyama M."/>
            <person name="Tashiro H."/>
            <person name="Tanigami A."/>
            <person name="Fujiwara T."/>
            <person name="Ono T."/>
            <person name="Yamada K."/>
            <person name="Fujii Y."/>
            <person name="Ozaki K."/>
            <person name="Hirao M."/>
            <person name="Ohmori Y."/>
            <person name="Kawabata A."/>
            <person name="Hikiji T."/>
            <person name="Kobatake N."/>
            <person name="Inagaki H."/>
            <person name="Ikema Y."/>
            <person name="Okamoto S."/>
            <person name="Okitani R."/>
            <person name="Kawakami T."/>
            <person name="Noguchi S."/>
            <person name="Itoh T."/>
            <person name="Shigeta K."/>
            <person name="Senba T."/>
            <person name="Matsumura K."/>
            <person name="Nakajima Y."/>
            <person name="Mizuno T."/>
            <person name="Morinaga M."/>
            <person name="Sasaki M."/>
            <person name="Togashi T."/>
            <person name="Oyama M."/>
            <person name="Hata H."/>
            <person name="Watanabe M."/>
            <person name="Komatsu T."/>
            <person name="Mizushima-Sugano J."/>
            <person name="Satoh T."/>
            <person name="Shirai Y."/>
            <person name="Takahashi Y."/>
            <person name="Nakagawa K."/>
            <person name="Okumura K."/>
            <person name="Nagase T."/>
            <person name="Nomura N."/>
            <person name="Kikuchi H."/>
            <person name="Masuho Y."/>
            <person name="Yamashita R."/>
            <person name="Nakai K."/>
            <person name="Yada T."/>
            <person name="Nakamura Y."/>
            <person name="Ohara O."/>
            <person name="Isogai T."/>
            <person name="Sugano S."/>
        </authorList>
    </citation>
    <scope>NUCLEOTIDE SEQUENCE [LARGE SCALE MRNA]</scope>
</reference>
<reference key="5">
    <citation type="submission" date="2005-09" db="EMBL/GenBank/DDBJ databases">
        <authorList>
            <person name="Mural R.J."/>
            <person name="Istrail S."/>
            <person name="Sutton G.G."/>
            <person name="Florea L."/>
            <person name="Halpern A.L."/>
            <person name="Mobarry C.M."/>
            <person name="Lippert R."/>
            <person name="Walenz B."/>
            <person name="Shatkay H."/>
            <person name="Dew I."/>
            <person name="Miller J.R."/>
            <person name="Flanigan M.J."/>
            <person name="Edwards N.J."/>
            <person name="Bolanos R."/>
            <person name="Fasulo D."/>
            <person name="Halldorsson B.V."/>
            <person name="Hannenhalli S."/>
            <person name="Turner R."/>
            <person name="Yooseph S."/>
            <person name="Lu F."/>
            <person name="Nusskern D.R."/>
            <person name="Shue B.C."/>
            <person name="Zheng X.H."/>
            <person name="Zhong F."/>
            <person name="Delcher A.L."/>
            <person name="Huson D.H."/>
            <person name="Kravitz S.A."/>
            <person name="Mouchard L."/>
            <person name="Reinert K."/>
            <person name="Remington K.A."/>
            <person name="Clark A.G."/>
            <person name="Waterman M.S."/>
            <person name="Eichler E.E."/>
            <person name="Adams M.D."/>
            <person name="Hunkapiller M.W."/>
            <person name="Myers E.W."/>
            <person name="Venter J.C."/>
        </authorList>
    </citation>
    <scope>NUCLEOTIDE SEQUENCE [LARGE SCALE GENOMIC DNA]</scope>
</reference>
<reference key="6">
    <citation type="journal article" date="2004" name="Genome Res.">
        <title>The status, quality, and expansion of the NIH full-length cDNA project: the Mammalian Gene Collection (MGC).</title>
        <authorList>
            <consortium name="The MGC Project Team"/>
        </authorList>
    </citation>
    <scope>NUCLEOTIDE SEQUENCE [LARGE SCALE MRNA]</scope>
    <source>
        <tissue>Ovary</tissue>
        <tissue>Placenta</tissue>
        <tissue>Skin</tissue>
    </source>
</reference>
<reference key="7">
    <citation type="journal article" date="1996" name="Eur. J. Biochem.">
        <title>Characterization of the human small-ribosomal-subunit proteins by N-terminal and internal sequencing, and mass spectrometry.</title>
        <authorList>
            <person name="Vladimirov S.N."/>
            <person name="Ivanov A.V."/>
            <person name="Karpova G.G."/>
            <person name="Musolyamov A.K."/>
            <person name="Egorov T.A."/>
            <person name="Thiede B."/>
            <person name="Wittmann-Liebold B."/>
            <person name="Otto A."/>
        </authorList>
    </citation>
    <scope>PROTEIN SEQUENCE OF 2-15</scope>
    <source>
        <tissue>Placenta</tissue>
    </source>
</reference>
<reference key="8">
    <citation type="journal article" date="1992" name="Mol. Cell. Biol.">
        <title>Fine-structure map of the human ribosomal protein gene RPS14.</title>
        <authorList>
            <person name="Diaz J.-J."/>
            <person name="Roufa D.J."/>
        </authorList>
    </citation>
    <scope>MUTAGENESIS</scope>
</reference>
<reference key="9">
    <citation type="journal article" date="2003" name="Nature">
        <title>Proteomic characterization of the human centrosome by protein correlation profiling.</title>
        <authorList>
            <person name="Andersen J.S."/>
            <person name="Wilkinson C.J."/>
            <person name="Mayor T."/>
            <person name="Mortensen P."/>
            <person name="Nigg E.A."/>
            <person name="Mann M."/>
        </authorList>
    </citation>
    <scope>IDENTIFICATION BY MASS SPECTROMETRY</scope>
    <source>
        <tissue>Lymphoblast</tissue>
    </source>
</reference>
<reference key="10">
    <citation type="journal article" date="2008" name="J. Proteome Res.">
        <title>Phosphoproteome of resting human platelets.</title>
        <authorList>
            <person name="Zahedi R.P."/>
            <person name="Lewandrowski U."/>
            <person name="Wiesner J."/>
            <person name="Wortelkamp S."/>
            <person name="Moebius J."/>
            <person name="Schuetz C."/>
            <person name="Walter U."/>
            <person name="Gambaryan S."/>
            <person name="Sickmann A."/>
        </authorList>
    </citation>
    <scope>IDENTIFICATION BY MASS SPECTROMETRY [LARGE SCALE ANALYSIS]</scope>
    <source>
        <tissue>Platelet</tissue>
    </source>
</reference>
<reference key="11">
    <citation type="journal article" date="2008" name="Mol. Cell">
        <title>Kinase-selective enrichment enables quantitative phosphoproteomics of the kinome across the cell cycle.</title>
        <authorList>
            <person name="Daub H."/>
            <person name="Olsen J.V."/>
            <person name="Bairlein M."/>
            <person name="Gnad F."/>
            <person name="Oppermann F.S."/>
            <person name="Korner R."/>
            <person name="Greff Z."/>
            <person name="Keri G."/>
            <person name="Stemmann O."/>
            <person name="Mann M."/>
        </authorList>
    </citation>
    <scope>PHOSPHORYLATION [LARGE SCALE ANALYSIS] AT THR-133</scope>
    <scope>IDENTIFICATION BY MASS SPECTROMETRY [LARGE SCALE ANALYSIS]</scope>
    <source>
        <tissue>Cervix carcinoma</tissue>
    </source>
</reference>
<reference key="12">
    <citation type="journal article" date="2008" name="Proc. Natl. Acad. Sci. U.S.A.">
        <title>A quantitative atlas of mitotic phosphorylation.</title>
        <authorList>
            <person name="Dephoure N."/>
            <person name="Zhou C."/>
            <person name="Villen J."/>
            <person name="Beausoleil S.A."/>
            <person name="Bakalarski C.E."/>
            <person name="Elledge S.J."/>
            <person name="Gygi S.P."/>
        </authorList>
    </citation>
    <scope>IDENTIFICATION BY MASS SPECTROMETRY [LARGE SCALE ANALYSIS]</scope>
    <source>
        <tissue>Cervix carcinoma</tissue>
    </source>
</reference>
<reference key="13">
    <citation type="journal article" date="2009" name="Mol. Cell. Proteomics">
        <title>Large-scale proteomics analysis of the human kinome.</title>
        <authorList>
            <person name="Oppermann F.S."/>
            <person name="Gnad F."/>
            <person name="Olsen J.V."/>
            <person name="Hornberger R."/>
            <person name="Greff Z."/>
            <person name="Keri G."/>
            <person name="Mann M."/>
            <person name="Daub H."/>
        </authorList>
    </citation>
    <scope>IDENTIFICATION BY MASS SPECTROMETRY [LARGE SCALE ANALYSIS]</scope>
</reference>
<reference key="14">
    <citation type="journal article" date="2011" name="BMC Syst. Biol.">
        <title>Initial characterization of the human central proteome.</title>
        <authorList>
            <person name="Burkard T.R."/>
            <person name="Planyavsky M."/>
            <person name="Kaupe I."/>
            <person name="Breitwieser F.P."/>
            <person name="Buerckstuemmer T."/>
            <person name="Bennett K.L."/>
            <person name="Superti-Furga G."/>
            <person name="Colinge J."/>
        </authorList>
    </citation>
    <scope>IDENTIFICATION BY MASS SPECTROMETRY [LARGE SCALE ANALYSIS]</scope>
</reference>
<reference key="15">
    <citation type="journal article" date="2011" name="Sci. Signal.">
        <title>System-wide temporal characterization of the proteome and phosphoproteome of human embryonic stem cell differentiation.</title>
        <authorList>
            <person name="Rigbolt K.T."/>
            <person name="Prokhorova T.A."/>
            <person name="Akimov V."/>
            <person name="Henningsen J."/>
            <person name="Johansen P.T."/>
            <person name="Kratchmarova I."/>
            <person name="Kassem M."/>
            <person name="Mann M."/>
            <person name="Olsen J.V."/>
            <person name="Blagoev B."/>
        </authorList>
    </citation>
    <scope>IDENTIFICATION BY MASS SPECTROMETRY [LARGE SCALE ANALYSIS]</scope>
</reference>
<reference key="16">
    <citation type="journal article" date="2013" name="J. Proteome Res.">
        <title>Toward a comprehensive characterization of a human cancer cell phosphoproteome.</title>
        <authorList>
            <person name="Zhou H."/>
            <person name="Di Palma S."/>
            <person name="Preisinger C."/>
            <person name="Peng M."/>
            <person name="Polat A.N."/>
            <person name="Heck A.J."/>
            <person name="Mohammed S."/>
        </authorList>
    </citation>
    <scope>PHOSPHORYLATION [LARGE SCALE ANALYSIS] AT SER-139</scope>
    <scope>IDENTIFICATION BY MASS SPECTROMETRY [LARGE SCALE ANALYSIS]</scope>
    <source>
        <tissue>Cervix carcinoma</tissue>
        <tissue>Erythroleukemia</tissue>
    </source>
</reference>
<reference key="17">
    <citation type="journal article" date="2014" name="Curr. Opin. Struct. Biol.">
        <title>A new system for naming ribosomal proteins.</title>
        <authorList>
            <person name="Ban N."/>
            <person name="Beckmann R."/>
            <person name="Cate J.H.D."/>
            <person name="Dinman J.D."/>
            <person name="Dragon F."/>
            <person name="Ellis S.R."/>
            <person name="Lafontaine D.L.J."/>
            <person name="Lindahl L."/>
            <person name="Liljas A."/>
            <person name="Lipton J.M."/>
            <person name="McAlear M.A."/>
            <person name="Moore P.B."/>
            <person name="Noller H.F."/>
            <person name="Ortega J."/>
            <person name="Panse V.G."/>
            <person name="Ramakrishnan V."/>
            <person name="Spahn C.M.T."/>
            <person name="Steitz T.A."/>
            <person name="Tchorzewski M."/>
            <person name="Tollervey D."/>
            <person name="Warren A.J."/>
            <person name="Williamson J.R."/>
            <person name="Wilson D."/>
            <person name="Yonath A."/>
            <person name="Yusupov M."/>
        </authorList>
    </citation>
    <scope>NOMENCLATURE</scope>
</reference>
<reference key="18">
    <citation type="journal article" date="2014" name="J. Proteomics">
        <title>An enzyme assisted RP-RPLC approach for in-depth analysis of human liver phosphoproteome.</title>
        <authorList>
            <person name="Bian Y."/>
            <person name="Song C."/>
            <person name="Cheng K."/>
            <person name="Dong M."/>
            <person name="Wang F."/>
            <person name="Huang J."/>
            <person name="Sun D."/>
            <person name="Wang L."/>
            <person name="Ye M."/>
            <person name="Zou H."/>
        </authorList>
    </citation>
    <scope>PHOSPHORYLATION [LARGE SCALE ANALYSIS] AT SER-16</scope>
    <scope>IDENTIFICATION BY MASS SPECTROMETRY [LARGE SCALE ANALYSIS]</scope>
    <source>
        <tissue>Liver</tissue>
    </source>
</reference>
<reference key="19">
    <citation type="journal article" date="2015" name="Proteomics">
        <title>N-terminome analysis of the human mitochondrial proteome.</title>
        <authorList>
            <person name="Vaca Jacome A.S."/>
            <person name="Rabilloud T."/>
            <person name="Schaeffer-Reiss C."/>
            <person name="Rompais M."/>
            <person name="Ayoub D."/>
            <person name="Lane L."/>
            <person name="Bairoch A."/>
            <person name="Van Dorsselaer A."/>
            <person name="Carapito C."/>
        </authorList>
    </citation>
    <scope>IDENTIFICATION BY MASS SPECTROMETRY [LARGE SCALE ANALYSIS]</scope>
</reference>
<reference key="20">
    <citation type="journal article" date="2017" name="Nat. Struct. Mol. Biol.">
        <title>Site-specific mapping of the human SUMO proteome reveals co-modification with phosphorylation.</title>
        <authorList>
            <person name="Hendriks I.A."/>
            <person name="Lyon D."/>
            <person name="Young C."/>
            <person name="Jensen L.J."/>
            <person name="Vertegaal A.C."/>
            <person name="Nielsen M.L."/>
        </authorList>
    </citation>
    <scope>SUMOYLATION [LARGE SCALE ANALYSIS] AT LYS-61; LYS-63 AND LYS-106</scope>
    <scope>IDENTIFICATION BY MASS SPECTROMETRY [LARGE SCALE ANALYSIS]</scope>
</reference>
<reference key="21">
    <citation type="journal article" date="2013" name="Nature">
        <title>Structures of the human and Drosophila 80S ribosome.</title>
        <authorList>
            <person name="Anger A.M."/>
            <person name="Armache J.P."/>
            <person name="Berninghausen O."/>
            <person name="Habeck M."/>
            <person name="Subklewe M."/>
            <person name="Wilson D.N."/>
            <person name="Beckmann R."/>
        </authorList>
    </citation>
    <scope>STRUCTURE BY ELECTRON MICROSCOPY (5.0 ANGSTROMS) OF RIBOSOME</scope>
    <scope>FUNCTION</scope>
    <scope>SUBUNIT</scope>
    <scope>SUBCELLULAR LOCATION</scope>
</reference>
<reference evidence="8 9 10" key="22">
    <citation type="journal article" date="2021" name="Science">
        <title>Nucleolar maturation of the human small subunit processome.</title>
        <authorList>
            <person name="Singh S."/>
            <person name="Vanden Broeck A."/>
            <person name="Miller L."/>
            <person name="Chaker-Margot M."/>
            <person name="Klinge S."/>
        </authorList>
    </citation>
    <scope>STRUCTURE BY ELECTRON MICROSCOPY (2.70 ANGSTROMS)</scope>
    <scope>FUNCTION</scope>
    <scope>SUBUNIT</scope>
    <scope>SUBCELLULAR LOCATION</scope>
</reference>
<comment type="function">
    <text evidence="2 3">Component of the small ribosomal subunit. The ribosome is a large ribonucleoprotein complex responsible for the synthesis of proteins in the cell. Part of the small subunit (SSU) processome, first precursor of the small eukaryotic ribosomal subunit. During the assembly of the SSU processome in the nucleolus, many ribosome biogenesis factors, an RNA chaperone and ribosomal proteins associate with the nascent pre-rRNA and work in concert to generate RNA folding, modifications, rearrangements and cleavage as well as targeted degradation of pre-ribosomal RNA by the RNA exosome (PubMed:34516797).</text>
</comment>
<comment type="subunit">
    <text evidence="2 3">Component of the small ribosomal subunit. Part of the small subunit (SSU) processome, composed of more than 70 proteins and the RNA chaperone small nucleolar RNA (snoRNA) U3 (PubMed:34516797).</text>
</comment>
<comment type="interaction">
    <interactant intactId="EBI-352783">
        <id>P62263</id>
    </interactant>
    <interactant intactId="EBI-2896123">
        <id>Q9Y3D8</id>
        <label>AK6</label>
    </interactant>
    <organismsDiffer>false</organismsDiffer>
    <experiments>4</experiments>
</comment>
<comment type="interaction">
    <interactant intactId="EBI-352783">
        <id>P62263</id>
    </interactant>
    <interactant intactId="EBI-744525">
        <id>Q13601</id>
        <label>KRR1</label>
    </interactant>
    <organismsDiffer>false</organismsDiffer>
    <experiments>6</experiments>
</comment>
<comment type="interaction">
    <interactant intactId="EBI-352783">
        <id>P62263</id>
    </interactant>
    <interactant intactId="EBI-750973">
        <id>O00233</id>
        <label>PSMD9</label>
    </interactant>
    <organismsDiffer>false</organismsDiffer>
    <experiments>3</experiments>
</comment>
<comment type="interaction">
    <interactant intactId="EBI-352783">
        <id>P62263</id>
    </interactant>
    <interactant intactId="EBI-352378">
        <id>P61247</id>
        <label>RPS3A</label>
    </interactant>
    <organismsDiffer>false</organismsDiffer>
    <experiments>4</experiments>
</comment>
<comment type="interaction">
    <interactant intactId="EBI-352783">
        <id>P62263</id>
    </interactant>
    <interactant intactId="EBI-712521">
        <id>Q16594</id>
        <label>TAF9</label>
    </interactant>
    <organismsDiffer>false</organismsDiffer>
    <experiments>4</experiments>
</comment>
<comment type="subcellular location">
    <subcellularLocation>
        <location evidence="2">Cytoplasm</location>
    </subcellularLocation>
    <subcellularLocation>
        <location evidence="3">Nucleus</location>
        <location evidence="3">Nucleolus</location>
    </subcellularLocation>
</comment>
<comment type="similarity">
    <text evidence="6">Belongs to the universal ribosomal protein uS11 family.</text>
</comment>
<keyword id="KW-0002">3D-structure</keyword>
<keyword id="KW-0963">Cytoplasm</keyword>
<keyword id="KW-0903">Direct protein sequencing</keyword>
<keyword id="KW-1017">Isopeptide bond</keyword>
<keyword id="KW-0539">Nucleus</keyword>
<keyword id="KW-0597">Phosphoprotein</keyword>
<keyword id="KW-1267">Proteomics identification</keyword>
<keyword id="KW-1185">Reference proteome</keyword>
<keyword id="KW-0687">Ribonucleoprotein</keyword>
<keyword id="KW-0689">Ribosomal protein</keyword>
<keyword id="KW-0832">Ubl conjugation</keyword>
<name>RS14_HUMAN</name>
<dbReference type="EMBL" id="M13934">
    <property type="protein sequence ID" value="AAB59505.1"/>
    <property type="molecule type" value="Genomic_DNA"/>
</dbReference>
<dbReference type="EMBL" id="AF116710">
    <property type="protein sequence ID" value="AAF71130.1"/>
    <property type="molecule type" value="mRNA"/>
</dbReference>
<dbReference type="EMBL" id="AK312179">
    <property type="protein sequence ID" value="BAG35112.1"/>
    <property type="molecule type" value="mRNA"/>
</dbReference>
<dbReference type="EMBL" id="CH471062">
    <property type="protein sequence ID" value="EAW61723.1"/>
    <property type="molecule type" value="Genomic_DNA"/>
</dbReference>
<dbReference type="EMBL" id="CH471062">
    <property type="protein sequence ID" value="EAW61724.1"/>
    <property type="molecule type" value="Genomic_DNA"/>
</dbReference>
<dbReference type="EMBL" id="CH471062">
    <property type="protein sequence ID" value="EAW61725.1"/>
    <property type="molecule type" value="Genomic_DNA"/>
</dbReference>
<dbReference type="EMBL" id="CH471062">
    <property type="protein sequence ID" value="EAW61726.1"/>
    <property type="molecule type" value="Genomic_DNA"/>
</dbReference>
<dbReference type="EMBL" id="BC001126">
    <property type="protein sequence ID" value="AAH01126.1"/>
    <property type="molecule type" value="mRNA"/>
</dbReference>
<dbReference type="EMBL" id="BC003401">
    <property type="protein sequence ID" value="AAH03401.1"/>
    <property type="molecule type" value="mRNA"/>
</dbReference>
<dbReference type="EMBL" id="BC006784">
    <property type="protein sequence ID" value="AAH06784.1"/>
    <property type="molecule type" value="mRNA"/>
</dbReference>
<dbReference type="EMBL" id="BC020515">
    <property type="protein sequence ID" value="AAH20515.1"/>
    <property type="molecule type" value="mRNA"/>
</dbReference>
<dbReference type="EMBL" id="BC091474">
    <property type="protein sequence ID" value="AAH91474.1"/>
    <property type="molecule type" value="mRNA"/>
</dbReference>
<dbReference type="CCDS" id="CCDS4307.1"/>
<dbReference type="PIR" id="A25220">
    <property type="entry name" value="A25220"/>
</dbReference>
<dbReference type="RefSeq" id="NP_001020241.1">
    <property type="nucleotide sequence ID" value="NM_001025070.2"/>
</dbReference>
<dbReference type="RefSeq" id="NP_001020242.1">
    <property type="nucleotide sequence ID" value="NM_001025071.2"/>
</dbReference>
<dbReference type="RefSeq" id="NP_005608.1">
    <property type="nucleotide sequence ID" value="NM_005617.4"/>
</dbReference>
<dbReference type="PDB" id="4UG0">
    <property type="method" value="EM"/>
    <property type="chains" value="SO=1-151"/>
</dbReference>
<dbReference type="PDB" id="4V6X">
    <property type="method" value="EM"/>
    <property type="resolution" value="5.00 A"/>
    <property type="chains" value="AO=1-151"/>
</dbReference>
<dbReference type="PDB" id="5A2Q">
    <property type="method" value="EM"/>
    <property type="resolution" value="3.90 A"/>
    <property type="chains" value="O=1-151"/>
</dbReference>
<dbReference type="PDB" id="5AJ0">
    <property type="method" value="EM"/>
    <property type="resolution" value="3.50 A"/>
    <property type="chains" value="BO=1-151"/>
</dbReference>
<dbReference type="PDB" id="5FLX">
    <property type="method" value="EM"/>
    <property type="resolution" value="3.90 A"/>
    <property type="chains" value="O=1-151"/>
</dbReference>
<dbReference type="PDB" id="5LKS">
    <property type="method" value="EM"/>
    <property type="resolution" value="3.60 A"/>
    <property type="chains" value="SO=1-151"/>
</dbReference>
<dbReference type="PDB" id="5OA3">
    <property type="method" value="EM"/>
    <property type="resolution" value="4.30 A"/>
    <property type="chains" value="O=1-151"/>
</dbReference>
<dbReference type="PDB" id="5T2C">
    <property type="method" value="EM"/>
    <property type="resolution" value="3.60 A"/>
    <property type="chains" value="AO=1-151"/>
</dbReference>
<dbReference type="PDB" id="5VYC">
    <property type="method" value="X-ray"/>
    <property type="resolution" value="6.00 A"/>
    <property type="chains" value="O1/O2/O3/O4/O5/O6=1-151"/>
</dbReference>
<dbReference type="PDB" id="6FEC">
    <property type="method" value="EM"/>
    <property type="resolution" value="6.30 A"/>
    <property type="chains" value="j=16-151"/>
</dbReference>
<dbReference type="PDB" id="6G18">
    <property type="method" value="EM"/>
    <property type="resolution" value="3.60 A"/>
    <property type="chains" value="O=1-151"/>
</dbReference>
<dbReference type="PDB" id="6G4S">
    <property type="method" value="EM"/>
    <property type="resolution" value="4.00 A"/>
    <property type="chains" value="O=1-151"/>
</dbReference>
<dbReference type="PDB" id="6G4W">
    <property type="method" value="EM"/>
    <property type="resolution" value="4.50 A"/>
    <property type="chains" value="O=1-151"/>
</dbReference>
<dbReference type="PDB" id="6G51">
    <property type="method" value="EM"/>
    <property type="resolution" value="4.10 A"/>
    <property type="chains" value="O=1-151"/>
</dbReference>
<dbReference type="PDB" id="6G53">
    <property type="method" value="EM"/>
    <property type="resolution" value="4.50 A"/>
    <property type="chains" value="O=1-151"/>
</dbReference>
<dbReference type="PDB" id="6G5H">
    <property type="method" value="EM"/>
    <property type="resolution" value="3.60 A"/>
    <property type="chains" value="O=1-151"/>
</dbReference>
<dbReference type="PDB" id="6G5I">
    <property type="method" value="EM"/>
    <property type="resolution" value="3.50 A"/>
    <property type="chains" value="O=1-151"/>
</dbReference>
<dbReference type="PDB" id="6IP5">
    <property type="method" value="EM"/>
    <property type="resolution" value="3.90 A"/>
    <property type="chains" value="3L=1-151"/>
</dbReference>
<dbReference type="PDB" id="6IP6">
    <property type="method" value="EM"/>
    <property type="resolution" value="4.50 A"/>
    <property type="chains" value="3L=1-151"/>
</dbReference>
<dbReference type="PDB" id="6IP8">
    <property type="method" value="EM"/>
    <property type="resolution" value="3.90 A"/>
    <property type="chains" value="3L=1-151"/>
</dbReference>
<dbReference type="PDB" id="6OLE">
    <property type="method" value="EM"/>
    <property type="resolution" value="3.10 A"/>
    <property type="chains" value="SO=15-151"/>
</dbReference>
<dbReference type="PDB" id="6OLF">
    <property type="method" value="EM"/>
    <property type="resolution" value="3.90 A"/>
    <property type="chains" value="SO=15-151"/>
</dbReference>
<dbReference type="PDB" id="6OLG">
    <property type="method" value="EM"/>
    <property type="resolution" value="3.40 A"/>
    <property type="chains" value="BO=16-151"/>
</dbReference>
<dbReference type="PDB" id="6OLI">
    <property type="method" value="EM"/>
    <property type="resolution" value="3.50 A"/>
    <property type="chains" value="SO=15-151"/>
</dbReference>
<dbReference type="PDB" id="6OLZ">
    <property type="method" value="EM"/>
    <property type="resolution" value="3.90 A"/>
    <property type="chains" value="BO=16-151"/>
</dbReference>
<dbReference type="PDB" id="6OM0">
    <property type="method" value="EM"/>
    <property type="resolution" value="3.10 A"/>
    <property type="chains" value="SO=15-151"/>
</dbReference>
<dbReference type="PDB" id="6OM7">
    <property type="method" value="EM"/>
    <property type="resolution" value="3.70 A"/>
    <property type="chains" value="SO=15-151"/>
</dbReference>
<dbReference type="PDB" id="6QZP">
    <property type="method" value="EM"/>
    <property type="resolution" value="2.90 A"/>
    <property type="chains" value="SO=12-151"/>
</dbReference>
<dbReference type="PDB" id="6XA1">
    <property type="method" value="EM"/>
    <property type="resolution" value="2.80 A"/>
    <property type="chains" value="SO=17-151"/>
</dbReference>
<dbReference type="PDB" id="6Y0G">
    <property type="method" value="EM"/>
    <property type="resolution" value="3.20 A"/>
    <property type="chains" value="SO=1-151"/>
</dbReference>
<dbReference type="PDB" id="6Y2L">
    <property type="method" value="EM"/>
    <property type="resolution" value="3.00 A"/>
    <property type="chains" value="SO=1-151"/>
</dbReference>
<dbReference type="PDB" id="6Y57">
    <property type="method" value="EM"/>
    <property type="resolution" value="3.50 A"/>
    <property type="chains" value="SO=1-151"/>
</dbReference>
<dbReference type="PDB" id="6YBD">
    <property type="method" value="EM"/>
    <property type="resolution" value="3.30 A"/>
    <property type="chains" value="P=1-151"/>
</dbReference>
<dbReference type="PDB" id="6YBW">
    <property type="method" value="EM"/>
    <property type="resolution" value="3.10 A"/>
    <property type="chains" value="P=1-151"/>
</dbReference>
<dbReference type="PDB" id="6Z6L">
    <property type="method" value="EM"/>
    <property type="resolution" value="3.00 A"/>
    <property type="chains" value="SO=1-151"/>
</dbReference>
<dbReference type="PDB" id="6Z6M">
    <property type="method" value="EM"/>
    <property type="resolution" value="3.10 A"/>
    <property type="chains" value="SO=1-151"/>
</dbReference>
<dbReference type="PDB" id="6Z6N">
    <property type="method" value="EM"/>
    <property type="resolution" value="2.90 A"/>
    <property type="chains" value="SO=1-151"/>
</dbReference>
<dbReference type="PDB" id="6ZLW">
    <property type="method" value="EM"/>
    <property type="resolution" value="2.60 A"/>
    <property type="chains" value="P=1-151"/>
</dbReference>
<dbReference type="PDB" id="6ZM7">
    <property type="method" value="EM"/>
    <property type="resolution" value="2.70 A"/>
    <property type="chains" value="SO=1-151"/>
</dbReference>
<dbReference type="PDB" id="6ZME">
    <property type="method" value="EM"/>
    <property type="resolution" value="3.00 A"/>
    <property type="chains" value="SO=1-151"/>
</dbReference>
<dbReference type="PDB" id="6ZMI">
    <property type="method" value="EM"/>
    <property type="resolution" value="2.60 A"/>
    <property type="chains" value="SO=1-151"/>
</dbReference>
<dbReference type="PDB" id="6ZMO">
    <property type="method" value="EM"/>
    <property type="resolution" value="3.10 A"/>
    <property type="chains" value="SO=1-151"/>
</dbReference>
<dbReference type="PDB" id="6ZMT">
    <property type="method" value="EM"/>
    <property type="resolution" value="3.00 A"/>
    <property type="chains" value="P=1-151"/>
</dbReference>
<dbReference type="PDB" id="6ZMW">
    <property type="method" value="EM"/>
    <property type="resolution" value="3.70 A"/>
    <property type="chains" value="P=1-151"/>
</dbReference>
<dbReference type="PDB" id="6ZN5">
    <property type="method" value="EM"/>
    <property type="resolution" value="3.20 A"/>
    <property type="chains" value="P=17-151"/>
</dbReference>
<dbReference type="PDB" id="6ZOJ">
    <property type="method" value="EM"/>
    <property type="resolution" value="2.80 A"/>
    <property type="chains" value="O=1-151"/>
</dbReference>
<dbReference type="PDB" id="6ZOK">
    <property type="method" value="EM"/>
    <property type="resolution" value="2.80 A"/>
    <property type="chains" value="O=1-151"/>
</dbReference>
<dbReference type="PDB" id="6ZON">
    <property type="method" value="EM"/>
    <property type="resolution" value="3.00 A"/>
    <property type="chains" value="i=1-151"/>
</dbReference>
<dbReference type="PDB" id="6ZP4">
    <property type="method" value="EM"/>
    <property type="resolution" value="2.90 A"/>
    <property type="chains" value="i=1-151"/>
</dbReference>
<dbReference type="PDB" id="6ZUO">
    <property type="method" value="EM"/>
    <property type="resolution" value="3.10 A"/>
    <property type="chains" value="O=1-151"/>
</dbReference>
<dbReference type="PDB" id="6ZV6">
    <property type="method" value="EM"/>
    <property type="resolution" value="2.90 A"/>
    <property type="chains" value="O=1-151"/>
</dbReference>
<dbReference type="PDB" id="6ZVH">
    <property type="method" value="EM"/>
    <property type="resolution" value="2.90 A"/>
    <property type="chains" value="O=12-151"/>
</dbReference>
<dbReference type="PDB" id="6ZXD">
    <property type="method" value="EM"/>
    <property type="resolution" value="3.20 A"/>
    <property type="chains" value="O=1-151"/>
</dbReference>
<dbReference type="PDB" id="6ZXE">
    <property type="method" value="EM"/>
    <property type="resolution" value="3.00 A"/>
    <property type="chains" value="O=1-151"/>
</dbReference>
<dbReference type="PDB" id="6ZXF">
    <property type="method" value="EM"/>
    <property type="resolution" value="3.70 A"/>
    <property type="chains" value="O=1-151"/>
</dbReference>
<dbReference type="PDB" id="6ZXG">
    <property type="method" value="EM"/>
    <property type="resolution" value="2.60 A"/>
    <property type="chains" value="O=1-151"/>
</dbReference>
<dbReference type="PDB" id="6ZXH">
    <property type="method" value="EM"/>
    <property type="resolution" value="2.70 A"/>
    <property type="chains" value="O=1-151"/>
</dbReference>
<dbReference type="PDB" id="7A09">
    <property type="method" value="EM"/>
    <property type="resolution" value="3.50 A"/>
    <property type="chains" value="i=1-151"/>
</dbReference>
<dbReference type="PDB" id="7K5I">
    <property type="method" value="EM"/>
    <property type="resolution" value="2.90 A"/>
    <property type="chains" value="O=1-151"/>
</dbReference>
<dbReference type="PDB" id="7MQ8">
    <property type="method" value="EM"/>
    <property type="resolution" value="3.60 A"/>
    <property type="chains" value="NG=1-151"/>
</dbReference>
<dbReference type="PDB" id="7MQ9">
    <property type="method" value="EM"/>
    <property type="resolution" value="3.87 A"/>
    <property type="chains" value="NG=1-151"/>
</dbReference>
<dbReference type="PDB" id="7MQA">
    <property type="method" value="EM"/>
    <property type="resolution" value="2.70 A"/>
    <property type="chains" value="NG=1-151"/>
</dbReference>
<dbReference type="PDB" id="7QP6">
    <property type="method" value="EM"/>
    <property type="resolution" value="4.70 A"/>
    <property type="chains" value="P=1-151"/>
</dbReference>
<dbReference type="PDB" id="7QP7">
    <property type="method" value="EM"/>
    <property type="resolution" value="3.70 A"/>
    <property type="chains" value="P=1-151"/>
</dbReference>
<dbReference type="PDB" id="7R4X">
    <property type="method" value="EM"/>
    <property type="resolution" value="2.15 A"/>
    <property type="chains" value="O=1-151"/>
</dbReference>
<dbReference type="PDB" id="7TQL">
    <property type="method" value="EM"/>
    <property type="resolution" value="3.40 A"/>
    <property type="chains" value="P=18-151"/>
</dbReference>
<dbReference type="PDB" id="7WTS">
    <property type="method" value="EM"/>
    <property type="resolution" value="3.20 A"/>
    <property type="chains" value="O=1-151"/>
</dbReference>
<dbReference type="PDB" id="7WTT">
    <property type="method" value="EM"/>
    <property type="resolution" value="3.10 A"/>
    <property type="chains" value="O=1-151"/>
</dbReference>
<dbReference type="PDB" id="7WTU">
    <property type="method" value="EM"/>
    <property type="resolution" value="3.00 A"/>
    <property type="chains" value="O=1-151"/>
</dbReference>
<dbReference type="PDB" id="7WTV">
    <property type="method" value="EM"/>
    <property type="resolution" value="3.50 A"/>
    <property type="chains" value="O=1-151"/>
</dbReference>
<dbReference type="PDB" id="7WTW">
    <property type="method" value="EM"/>
    <property type="resolution" value="3.20 A"/>
    <property type="chains" value="O=1-151"/>
</dbReference>
<dbReference type="PDB" id="7WTX">
    <property type="method" value="EM"/>
    <property type="resolution" value="3.10 A"/>
    <property type="chains" value="O=1-151"/>
</dbReference>
<dbReference type="PDB" id="7WTZ">
    <property type="method" value="EM"/>
    <property type="resolution" value="3.00 A"/>
    <property type="chains" value="O=1-151"/>
</dbReference>
<dbReference type="PDB" id="7WU0">
    <property type="method" value="EM"/>
    <property type="resolution" value="3.30 A"/>
    <property type="chains" value="O=1-151"/>
</dbReference>
<dbReference type="PDB" id="7XNX">
    <property type="method" value="EM"/>
    <property type="resolution" value="2.70 A"/>
    <property type="chains" value="SO=1-151"/>
</dbReference>
<dbReference type="PDB" id="7XNY">
    <property type="method" value="EM"/>
    <property type="resolution" value="2.50 A"/>
    <property type="chains" value="SO=1-151"/>
</dbReference>
<dbReference type="PDB" id="8G5Y">
    <property type="method" value="EM"/>
    <property type="resolution" value="2.29 A"/>
    <property type="chains" value="SO=1-151"/>
</dbReference>
<dbReference type="PDB" id="8G60">
    <property type="method" value="EM"/>
    <property type="resolution" value="2.54 A"/>
    <property type="chains" value="SO=1-151"/>
</dbReference>
<dbReference type="PDB" id="8G61">
    <property type="method" value="EM"/>
    <property type="resolution" value="2.94 A"/>
    <property type="chains" value="SO=1-151"/>
</dbReference>
<dbReference type="PDB" id="8G6J">
    <property type="method" value="EM"/>
    <property type="resolution" value="2.80 A"/>
    <property type="chains" value="SO=1-151"/>
</dbReference>
<dbReference type="PDB" id="8GLP">
    <property type="method" value="EM"/>
    <property type="resolution" value="1.67 A"/>
    <property type="chains" value="SO=1-151"/>
</dbReference>
<dbReference type="PDB" id="8IFD">
    <property type="method" value="EM"/>
    <property type="resolution" value="2.59 A"/>
    <property type="chains" value="3L=1-151"/>
</dbReference>
<dbReference type="PDB" id="8IFE">
    <property type="method" value="EM"/>
    <property type="resolution" value="2.57 A"/>
    <property type="chains" value="3L=1-151"/>
</dbReference>
<dbReference type="PDB" id="8JDJ">
    <property type="method" value="EM"/>
    <property type="resolution" value="2.50 A"/>
    <property type="chains" value="AA=1-151"/>
</dbReference>
<dbReference type="PDB" id="8JDK">
    <property type="method" value="EM"/>
    <property type="resolution" value="2.26 A"/>
    <property type="chains" value="AA=1-151"/>
</dbReference>
<dbReference type="PDB" id="8JDL">
    <property type="method" value="EM"/>
    <property type="resolution" value="2.42 A"/>
    <property type="chains" value="AA=1-151"/>
</dbReference>
<dbReference type="PDB" id="8JDM">
    <property type="method" value="EM"/>
    <property type="resolution" value="2.67 A"/>
    <property type="chains" value="AA=1-151"/>
</dbReference>
<dbReference type="PDB" id="8K2C">
    <property type="method" value="EM"/>
    <property type="resolution" value="2.40 A"/>
    <property type="chains" value="SO=1-151"/>
</dbReference>
<dbReference type="PDB" id="8OZ0">
    <property type="method" value="EM"/>
    <property type="resolution" value="3.50 A"/>
    <property type="chains" value="T=1-151"/>
</dbReference>
<dbReference type="PDB" id="8PJ1">
    <property type="method" value="EM"/>
    <property type="resolution" value="3.40 A"/>
    <property type="chains" value="P=1-151"/>
</dbReference>
<dbReference type="PDB" id="8PJ2">
    <property type="method" value="EM"/>
    <property type="resolution" value="3.40 A"/>
    <property type="chains" value="P=1-151"/>
</dbReference>
<dbReference type="PDB" id="8PJ3">
    <property type="method" value="EM"/>
    <property type="resolution" value="3.70 A"/>
    <property type="chains" value="P=1-151"/>
</dbReference>
<dbReference type="PDB" id="8PJ4">
    <property type="method" value="EM"/>
    <property type="resolution" value="3.20 A"/>
    <property type="chains" value="P=1-151"/>
</dbReference>
<dbReference type="PDB" id="8PJ5">
    <property type="method" value="EM"/>
    <property type="resolution" value="2.90 A"/>
    <property type="chains" value="P=1-151"/>
</dbReference>
<dbReference type="PDB" id="8PJ6">
    <property type="method" value="EM"/>
    <property type="resolution" value="2.90 A"/>
    <property type="chains" value="P=1-151"/>
</dbReference>
<dbReference type="PDB" id="8PPK">
    <property type="method" value="EM"/>
    <property type="resolution" value="2.98 A"/>
    <property type="chains" value="O=1-151"/>
</dbReference>
<dbReference type="PDB" id="8PPL">
    <property type="method" value="EM"/>
    <property type="resolution" value="2.65 A"/>
    <property type="chains" value="AO=1-151"/>
</dbReference>
<dbReference type="PDB" id="8QOI">
    <property type="method" value="EM"/>
    <property type="resolution" value="1.90 A"/>
    <property type="chains" value="SO=1-151"/>
</dbReference>
<dbReference type="PDB" id="8RG0">
    <property type="method" value="EM"/>
    <property type="resolution" value="3.40 A"/>
    <property type="chains" value="P=1-151"/>
</dbReference>
<dbReference type="PDB" id="8T4S">
    <property type="method" value="EM"/>
    <property type="resolution" value="2.60 A"/>
    <property type="chains" value="O=1-151"/>
</dbReference>
<dbReference type="PDB" id="8UKB">
    <property type="method" value="EM"/>
    <property type="resolution" value="3.05 A"/>
    <property type="chains" value="SO=12-151"/>
</dbReference>
<dbReference type="PDB" id="8XP2">
    <property type="method" value="EM"/>
    <property type="resolution" value="3.20 A"/>
    <property type="chains" value="SO=1-151"/>
</dbReference>
<dbReference type="PDB" id="8XP3">
    <property type="method" value="EM"/>
    <property type="resolution" value="3.40 A"/>
    <property type="chains" value="SO=1-151"/>
</dbReference>
<dbReference type="PDB" id="8XSX">
    <property type="method" value="EM"/>
    <property type="resolution" value="2.40 A"/>
    <property type="chains" value="SO=1-151"/>
</dbReference>
<dbReference type="PDB" id="8XSY">
    <property type="method" value="EM"/>
    <property type="resolution" value="3.00 A"/>
    <property type="chains" value="SO=1-151"/>
</dbReference>
<dbReference type="PDB" id="8XSZ">
    <property type="method" value="EM"/>
    <property type="resolution" value="3.20 A"/>
    <property type="chains" value="SO=1-151"/>
</dbReference>
<dbReference type="PDB" id="8XXL">
    <property type="method" value="EM"/>
    <property type="resolution" value="2.90 A"/>
    <property type="chains" value="SO=1-151"/>
</dbReference>
<dbReference type="PDB" id="8XXM">
    <property type="method" value="EM"/>
    <property type="resolution" value="3.20 A"/>
    <property type="chains" value="SO=1-151"/>
</dbReference>
<dbReference type="PDB" id="8XXN">
    <property type="method" value="EM"/>
    <property type="resolution" value="3.60 A"/>
    <property type="chains" value="SO=1-151"/>
</dbReference>
<dbReference type="PDB" id="8Y0W">
    <property type="method" value="EM"/>
    <property type="resolution" value="3.40 A"/>
    <property type="chains" value="SO=1-151"/>
</dbReference>
<dbReference type="PDB" id="8Y0X">
    <property type="method" value="EM"/>
    <property type="resolution" value="3.30 A"/>
    <property type="chains" value="SO=1-151"/>
</dbReference>
<dbReference type="PDB" id="8YOO">
    <property type="method" value="EM"/>
    <property type="resolution" value="2.00 A"/>
    <property type="chains" value="SO=1-151"/>
</dbReference>
<dbReference type="PDB" id="8YOP">
    <property type="method" value="EM"/>
    <property type="resolution" value="2.20 A"/>
    <property type="chains" value="SO=1-151"/>
</dbReference>
<dbReference type="PDB" id="8ZDB">
    <property type="method" value="EM"/>
    <property type="resolution" value="3.60 A"/>
    <property type="chains" value="O=1-151"/>
</dbReference>
<dbReference type="PDB" id="8ZDC">
    <property type="method" value="EM"/>
    <property type="resolution" value="3.80 A"/>
    <property type="chains" value="O=1-151"/>
</dbReference>
<dbReference type="PDB" id="8ZDD">
    <property type="method" value="EM"/>
    <property type="resolution" value="3.70 A"/>
    <property type="chains" value="O=1-151"/>
</dbReference>
<dbReference type="PDB" id="9BKD">
    <property type="method" value="EM"/>
    <property type="resolution" value="2.60 A"/>
    <property type="chains" value="P=1-151"/>
</dbReference>
<dbReference type="PDB" id="9BLN">
    <property type="method" value="EM"/>
    <property type="resolution" value="3.90 A"/>
    <property type="chains" value="P=1-151"/>
</dbReference>
<dbReference type="PDB" id="9C3H">
    <property type="method" value="EM"/>
    <property type="resolution" value="2.00 A"/>
    <property type="chains" value="SO=1-151"/>
</dbReference>
<dbReference type="PDB" id="9G8M">
    <property type="method" value="EM"/>
    <property type="resolution" value="3.30 A"/>
    <property type="chains" value="SO=1-151"/>
</dbReference>
<dbReference type="PDB" id="9G8O">
    <property type="method" value="EM"/>
    <property type="resolution" value="3.40 A"/>
    <property type="chains" value="SO=1-151"/>
</dbReference>
<dbReference type="PDBsum" id="4UG0"/>
<dbReference type="PDBsum" id="4V6X"/>
<dbReference type="PDBsum" id="5A2Q"/>
<dbReference type="PDBsum" id="5AJ0"/>
<dbReference type="PDBsum" id="5FLX"/>
<dbReference type="PDBsum" id="5LKS"/>
<dbReference type="PDBsum" id="5OA3"/>
<dbReference type="PDBsum" id="5T2C"/>
<dbReference type="PDBsum" id="5VYC"/>
<dbReference type="PDBsum" id="6FEC"/>
<dbReference type="PDBsum" id="6G18"/>
<dbReference type="PDBsum" id="6G4S"/>
<dbReference type="PDBsum" id="6G4W"/>
<dbReference type="PDBsum" id="6G51"/>
<dbReference type="PDBsum" id="6G53"/>
<dbReference type="PDBsum" id="6G5H"/>
<dbReference type="PDBsum" id="6G5I"/>
<dbReference type="PDBsum" id="6IP5"/>
<dbReference type="PDBsum" id="6IP6"/>
<dbReference type="PDBsum" id="6IP8"/>
<dbReference type="PDBsum" id="6OLE"/>
<dbReference type="PDBsum" id="6OLF"/>
<dbReference type="PDBsum" id="6OLG"/>
<dbReference type="PDBsum" id="6OLI"/>
<dbReference type="PDBsum" id="6OLZ"/>
<dbReference type="PDBsum" id="6OM0"/>
<dbReference type="PDBsum" id="6OM7"/>
<dbReference type="PDBsum" id="6QZP"/>
<dbReference type="PDBsum" id="6XA1"/>
<dbReference type="PDBsum" id="6Y0G"/>
<dbReference type="PDBsum" id="6Y2L"/>
<dbReference type="PDBsum" id="6Y57"/>
<dbReference type="PDBsum" id="6YBD"/>
<dbReference type="PDBsum" id="6YBW"/>
<dbReference type="PDBsum" id="6Z6L"/>
<dbReference type="PDBsum" id="6Z6M"/>
<dbReference type="PDBsum" id="6Z6N"/>
<dbReference type="PDBsum" id="6ZLW"/>
<dbReference type="PDBsum" id="6ZM7"/>
<dbReference type="PDBsum" id="6ZME"/>
<dbReference type="PDBsum" id="6ZMI"/>
<dbReference type="PDBsum" id="6ZMO"/>
<dbReference type="PDBsum" id="6ZMT"/>
<dbReference type="PDBsum" id="6ZMW"/>
<dbReference type="PDBsum" id="6ZN5"/>
<dbReference type="PDBsum" id="6ZOJ"/>
<dbReference type="PDBsum" id="6ZOK"/>
<dbReference type="PDBsum" id="6ZON"/>
<dbReference type="PDBsum" id="6ZP4"/>
<dbReference type="PDBsum" id="6ZUO"/>
<dbReference type="PDBsum" id="6ZV6"/>
<dbReference type="PDBsum" id="6ZVH"/>
<dbReference type="PDBsum" id="6ZXD"/>
<dbReference type="PDBsum" id="6ZXE"/>
<dbReference type="PDBsum" id="6ZXF"/>
<dbReference type="PDBsum" id="6ZXG"/>
<dbReference type="PDBsum" id="6ZXH"/>
<dbReference type="PDBsum" id="7A09"/>
<dbReference type="PDBsum" id="7K5I"/>
<dbReference type="PDBsum" id="7MQ8"/>
<dbReference type="PDBsum" id="7MQ9"/>
<dbReference type="PDBsum" id="7MQA"/>
<dbReference type="PDBsum" id="7QP6"/>
<dbReference type="PDBsum" id="7QP7"/>
<dbReference type="PDBsum" id="7R4X"/>
<dbReference type="PDBsum" id="7TQL"/>
<dbReference type="PDBsum" id="7WTS"/>
<dbReference type="PDBsum" id="7WTT"/>
<dbReference type="PDBsum" id="7WTU"/>
<dbReference type="PDBsum" id="7WTV"/>
<dbReference type="PDBsum" id="7WTW"/>
<dbReference type="PDBsum" id="7WTX"/>
<dbReference type="PDBsum" id="7WTZ"/>
<dbReference type="PDBsum" id="7WU0"/>
<dbReference type="PDBsum" id="7XNX"/>
<dbReference type="PDBsum" id="7XNY"/>
<dbReference type="PDBsum" id="8G5Y"/>
<dbReference type="PDBsum" id="8G60"/>
<dbReference type="PDBsum" id="8G61"/>
<dbReference type="PDBsum" id="8G6J"/>
<dbReference type="PDBsum" id="8GLP"/>
<dbReference type="PDBsum" id="8IFD"/>
<dbReference type="PDBsum" id="8IFE"/>
<dbReference type="PDBsum" id="8JDJ"/>
<dbReference type="PDBsum" id="8JDK"/>
<dbReference type="PDBsum" id="8JDL"/>
<dbReference type="PDBsum" id="8JDM"/>
<dbReference type="PDBsum" id="8K2C"/>
<dbReference type="PDBsum" id="8OZ0"/>
<dbReference type="PDBsum" id="8PJ1"/>
<dbReference type="PDBsum" id="8PJ2"/>
<dbReference type="PDBsum" id="8PJ3"/>
<dbReference type="PDBsum" id="8PJ4"/>
<dbReference type="PDBsum" id="8PJ5"/>
<dbReference type="PDBsum" id="8PJ6"/>
<dbReference type="PDBsum" id="8PPK"/>
<dbReference type="PDBsum" id="8PPL"/>
<dbReference type="PDBsum" id="8QOI"/>
<dbReference type="PDBsum" id="8RG0"/>
<dbReference type="PDBsum" id="8T4S"/>
<dbReference type="PDBsum" id="8UKB"/>
<dbReference type="PDBsum" id="8XP2"/>
<dbReference type="PDBsum" id="8XP3"/>
<dbReference type="PDBsum" id="8XSX"/>
<dbReference type="PDBsum" id="8XSY"/>
<dbReference type="PDBsum" id="8XSZ"/>
<dbReference type="PDBsum" id="8XXL"/>
<dbReference type="PDBsum" id="8XXM"/>
<dbReference type="PDBsum" id="8XXN"/>
<dbReference type="PDBsum" id="8Y0W"/>
<dbReference type="PDBsum" id="8Y0X"/>
<dbReference type="PDBsum" id="8YOO"/>
<dbReference type="PDBsum" id="8YOP"/>
<dbReference type="PDBsum" id="8ZDB"/>
<dbReference type="PDBsum" id="8ZDC"/>
<dbReference type="PDBsum" id="8ZDD"/>
<dbReference type="PDBsum" id="9BKD"/>
<dbReference type="PDBsum" id="9BLN"/>
<dbReference type="PDBsum" id="9C3H"/>
<dbReference type="PDBsum" id="9G8M"/>
<dbReference type="PDBsum" id="9G8O"/>
<dbReference type="EMDB" id="EMD-10668"/>
<dbReference type="EMDB" id="EMD-10674"/>
<dbReference type="EMDB" id="EMD-10690"/>
<dbReference type="EMDB" id="EMD-10769"/>
<dbReference type="EMDB" id="EMD-10775"/>
<dbReference type="EMDB" id="EMD-11098"/>
<dbReference type="EMDB" id="EMD-11099"/>
<dbReference type="EMDB" id="EMD-11100"/>
<dbReference type="EMDB" id="EMD-11276"/>
<dbReference type="EMDB" id="EMD-11288"/>
<dbReference type="EMDB" id="EMD-11289"/>
<dbReference type="EMDB" id="EMD-11292"/>
<dbReference type="EMDB" id="EMD-11299"/>
<dbReference type="EMDB" id="EMD-11301"/>
<dbReference type="EMDB" id="EMD-11302"/>
<dbReference type="EMDB" id="EMD-11310"/>
<dbReference type="EMDB" id="EMD-11320"/>
<dbReference type="EMDB" id="EMD-11321"/>
<dbReference type="EMDB" id="EMD-11325"/>
<dbReference type="EMDB" id="EMD-11335"/>
<dbReference type="EMDB" id="EMD-11440"/>
<dbReference type="EMDB" id="EMD-11441"/>
<dbReference type="EMDB" id="EMD-11456"/>
<dbReference type="EMDB" id="EMD-11517"/>
<dbReference type="EMDB" id="EMD-11518"/>
<dbReference type="EMDB" id="EMD-11519"/>
<dbReference type="EMDB" id="EMD-11520"/>
<dbReference type="EMDB" id="EMD-11521"/>
<dbReference type="EMDB" id="EMD-11602"/>
<dbReference type="EMDB" id="EMD-14113"/>
<dbReference type="EMDB" id="EMD-14114"/>
<dbReference type="EMDB" id="EMD-14317"/>
<dbReference type="EMDB" id="EMD-17297"/>
<dbReference type="EMDB" id="EMD-17696"/>
<dbReference type="EMDB" id="EMD-17697"/>
<dbReference type="EMDB" id="EMD-17698"/>
<dbReference type="EMDB" id="EMD-17699"/>
<dbReference type="EMDB" id="EMD-17700"/>
<dbReference type="EMDB" id="EMD-17701"/>
<dbReference type="EMDB" id="EMD-17804"/>
<dbReference type="EMDB" id="EMD-17805"/>
<dbReference type="EMDB" id="EMD-18539"/>
<dbReference type="EMDB" id="EMD-19128"/>
<dbReference type="EMDB" id="EMD-22681"/>
<dbReference type="EMDB" id="EMD-23936"/>
<dbReference type="EMDB" id="EMD-23937"/>
<dbReference type="EMDB" id="EMD-23938"/>
<dbReference type="EMDB" id="EMD-26067"/>
<dbReference type="EMDB" id="EMD-29757"/>
<dbReference type="EMDB" id="EMD-29758"/>
<dbReference type="EMDB" id="EMD-29759"/>
<dbReference type="EMDB" id="EMD-29760"/>
<dbReference type="EMDB" id="EMD-29771"/>
<dbReference type="EMDB" id="EMD-32799"/>
<dbReference type="EMDB" id="EMD-32800"/>
<dbReference type="EMDB" id="EMD-32801"/>
<dbReference type="EMDB" id="EMD-32802"/>
<dbReference type="EMDB" id="EMD-32803"/>
<dbReference type="EMDB" id="EMD-32804"/>
<dbReference type="EMDB" id="EMD-32806"/>
<dbReference type="EMDB" id="EMD-32807"/>
<dbReference type="EMDB" id="EMD-33329"/>
<dbReference type="EMDB" id="EMD-33330"/>
<dbReference type="EMDB" id="EMD-35413"/>
<dbReference type="EMDB" id="EMD-35414"/>
<dbReference type="EMDB" id="EMD-36178"/>
<dbReference type="EMDB" id="EMD-36179"/>
<dbReference type="EMDB" id="EMD-36180"/>
<dbReference type="EMDB" id="EMD-36181"/>
<dbReference type="EMDB" id="EMD-36838"/>
<dbReference type="EMDB" id="EMD-3770"/>
<dbReference type="EMDB" id="EMD-38548"/>
<dbReference type="EMDB" id="EMD-38549"/>
<dbReference type="EMDB" id="EMD-38629"/>
<dbReference type="EMDB" id="EMD-38630"/>
<dbReference type="EMDB" id="EMD-38631"/>
<dbReference type="EMDB" id="EMD-38752"/>
<dbReference type="EMDB" id="EMD-38753"/>
<dbReference type="EMDB" id="EMD-38754"/>
<dbReference type="EMDB" id="EMD-3883"/>
<dbReference type="EMDB" id="EMD-39455"/>
<dbReference type="EMDB" id="EMD-39456"/>
<dbReference type="EMDB" id="EMD-39956"/>
<dbReference type="EMDB" id="EMD-39957"/>
<dbReference type="EMDB" id="EMD-39958"/>
<dbReference type="EMDB" id="EMD-40205"/>
<dbReference type="EMDB" id="EMD-4070"/>
<dbReference type="EMDB" id="EMD-41039"/>
<dbReference type="EMDB" id="EMD-42351"/>
<dbReference type="EMDB" id="EMD-4242"/>
<dbReference type="EMDB" id="EMD-4337"/>
<dbReference type="EMDB" id="EMD-4348"/>
<dbReference type="EMDB" id="EMD-4349"/>
<dbReference type="EMDB" id="EMD-4350"/>
<dbReference type="EMDB" id="EMD-4351"/>
<dbReference type="EMDB" id="EMD-4352"/>
<dbReference type="EMDB" id="EMD-4353"/>
<dbReference type="EMDB" id="EMD-44641"/>
<dbReference type="EMDB" id="EMD-44671"/>
<dbReference type="EMDB" id="EMD-45170"/>
<dbReference type="EMDB" id="EMD-51132"/>
<dbReference type="EMDB" id="EMD-51134"/>
<dbReference type="EMDB" id="EMD-9701"/>
<dbReference type="EMDB" id="EMD-9702"/>
<dbReference type="EMDB" id="EMD-9703"/>
<dbReference type="SMR" id="P62263"/>
<dbReference type="BioGRID" id="112122">
    <property type="interactions" value="544"/>
</dbReference>
<dbReference type="ComplexPortal" id="CPX-5223">
    <property type="entry name" value="40S cytosolic small ribosomal subunit"/>
</dbReference>
<dbReference type="CORUM" id="P62263"/>
<dbReference type="FunCoup" id="P62263">
    <property type="interactions" value="1533"/>
</dbReference>
<dbReference type="IntAct" id="P62263">
    <property type="interactions" value="237"/>
</dbReference>
<dbReference type="MINT" id="P62263"/>
<dbReference type="STRING" id="9606.ENSP00000385958"/>
<dbReference type="MoonProt" id="P62263"/>
<dbReference type="GlyGen" id="P62263">
    <property type="glycosylation" value="2 sites, 1 N-linked glycan (1 site), 1 O-linked glycan (1 site)"/>
</dbReference>
<dbReference type="iPTMnet" id="P62263"/>
<dbReference type="MetOSite" id="P62263"/>
<dbReference type="PhosphoSitePlus" id="P62263"/>
<dbReference type="SwissPalm" id="P62263"/>
<dbReference type="BioMuta" id="RPS14"/>
<dbReference type="DMDM" id="50403752"/>
<dbReference type="jPOST" id="P62263"/>
<dbReference type="MassIVE" id="P62263"/>
<dbReference type="PaxDb" id="9606-ENSP00000385958"/>
<dbReference type="PeptideAtlas" id="P62263"/>
<dbReference type="ProteomicsDB" id="57379"/>
<dbReference type="Pumba" id="P62263"/>
<dbReference type="TopDownProteomics" id="P62263"/>
<dbReference type="Antibodypedia" id="1243">
    <property type="antibodies" value="270 antibodies from 30 providers"/>
</dbReference>
<dbReference type="DNASU" id="6208"/>
<dbReference type="Ensembl" id="ENST00000312037.6">
    <property type="protein sequence ID" value="ENSP00000311028.5"/>
    <property type="gene ID" value="ENSG00000164587.13"/>
</dbReference>
<dbReference type="Ensembl" id="ENST00000401695.8">
    <property type="protein sequence ID" value="ENSP00000385958.3"/>
    <property type="gene ID" value="ENSG00000164587.13"/>
</dbReference>
<dbReference type="Ensembl" id="ENST00000407193.7">
    <property type="protein sequence ID" value="ENSP00000385425.1"/>
    <property type="gene ID" value="ENSG00000164587.13"/>
</dbReference>
<dbReference type="Ensembl" id="ENST00000521466.5">
    <property type="protein sequence ID" value="ENSP00000428509.1"/>
    <property type="gene ID" value="ENSG00000164587.13"/>
</dbReference>
<dbReference type="GeneID" id="6208"/>
<dbReference type="KEGG" id="hsa:6208"/>
<dbReference type="MANE-Select" id="ENST00000407193.7">
    <property type="protein sequence ID" value="ENSP00000385425.1"/>
    <property type="RefSeq nucleotide sequence ID" value="NM_005617.4"/>
    <property type="RefSeq protein sequence ID" value="NP_005608.1"/>
</dbReference>
<dbReference type="UCSC" id="uc003lsh.4">
    <property type="organism name" value="human"/>
</dbReference>
<dbReference type="AGR" id="HGNC:10387"/>
<dbReference type="CTD" id="6208"/>
<dbReference type="DisGeNET" id="6208"/>
<dbReference type="GeneCards" id="RPS14"/>
<dbReference type="HGNC" id="HGNC:10387">
    <property type="gene designation" value="RPS14"/>
</dbReference>
<dbReference type="HPA" id="ENSG00000164587">
    <property type="expression patterns" value="Low tissue specificity"/>
</dbReference>
<dbReference type="MalaCards" id="RPS14"/>
<dbReference type="MIM" id="130620">
    <property type="type" value="gene"/>
</dbReference>
<dbReference type="neXtProt" id="NX_P62263"/>
<dbReference type="OpenTargets" id="ENSG00000164587"/>
<dbReference type="Orphanet" id="86841">
    <property type="disease" value="Myelodysplastic syndrome associated with isolated del(5q) chromosome abnormality"/>
</dbReference>
<dbReference type="PharmGKB" id="PA34786"/>
<dbReference type="VEuPathDB" id="HostDB:ENSG00000164587"/>
<dbReference type="eggNOG" id="KOG0407">
    <property type="taxonomic scope" value="Eukaryota"/>
</dbReference>
<dbReference type="GeneTree" id="ENSGT00390000000703"/>
<dbReference type="HOGENOM" id="CLU_072439_6_0_1"/>
<dbReference type="InParanoid" id="P62263"/>
<dbReference type="OMA" id="KWGVAHI"/>
<dbReference type="OrthoDB" id="1677536at2759"/>
<dbReference type="PAN-GO" id="P62263">
    <property type="GO annotations" value="7 GO annotations based on evolutionary models"/>
</dbReference>
<dbReference type="PhylomeDB" id="P62263"/>
<dbReference type="TreeFam" id="TF300125"/>
<dbReference type="PathwayCommons" id="P62263"/>
<dbReference type="Reactome" id="R-HSA-156827">
    <property type="pathway name" value="L13a-mediated translational silencing of Ceruloplasmin expression"/>
</dbReference>
<dbReference type="Reactome" id="R-HSA-156902">
    <property type="pathway name" value="Peptide chain elongation"/>
</dbReference>
<dbReference type="Reactome" id="R-HSA-1799339">
    <property type="pathway name" value="SRP-dependent cotranslational protein targeting to membrane"/>
</dbReference>
<dbReference type="Reactome" id="R-HSA-192823">
    <property type="pathway name" value="Viral mRNA Translation"/>
</dbReference>
<dbReference type="Reactome" id="R-HSA-2408557">
    <property type="pathway name" value="Selenocysteine synthesis"/>
</dbReference>
<dbReference type="Reactome" id="R-HSA-6790901">
    <property type="pathway name" value="rRNA modification in the nucleus and cytosol"/>
</dbReference>
<dbReference type="Reactome" id="R-HSA-6791226">
    <property type="pathway name" value="Major pathway of rRNA processing in the nucleolus and cytosol"/>
</dbReference>
<dbReference type="Reactome" id="R-HSA-72649">
    <property type="pathway name" value="Translation initiation complex formation"/>
</dbReference>
<dbReference type="Reactome" id="R-HSA-72689">
    <property type="pathway name" value="Formation of a pool of free 40S subunits"/>
</dbReference>
<dbReference type="Reactome" id="R-HSA-72695">
    <property type="pathway name" value="Formation of the ternary complex, and subsequently, the 43S complex"/>
</dbReference>
<dbReference type="Reactome" id="R-HSA-72702">
    <property type="pathway name" value="Ribosomal scanning and start codon recognition"/>
</dbReference>
<dbReference type="Reactome" id="R-HSA-72706">
    <property type="pathway name" value="GTP hydrolysis and joining of the 60S ribosomal subunit"/>
</dbReference>
<dbReference type="Reactome" id="R-HSA-72764">
    <property type="pathway name" value="Eukaryotic Translation Termination"/>
</dbReference>
<dbReference type="Reactome" id="R-HSA-9010553">
    <property type="pathway name" value="Regulation of expression of SLITs and ROBOs"/>
</dbReference>
<dbReference type="Reactome" id="R-HSA-9633012">
    <property type="pathway name" value="Response of EIF2AK4 (GCN2) to amino acid deficiency"/>
</dbReference>
<dbReference type="Reactome" id="R-HSA-9735869">
    <property type="pathway name" value="SARS-CoV-1 modulates host translation machinery"/>
</dbReference>
<dbReference type="Reactome" id="R-HSA-9754678">
    <property type="pathway name" value="SARS-CoV-2 modulates host translation machinery"/>
</dbReference>
<dbReference type="Reactome" id="R-HSA-975956">
    <property type="pathway name" value="Nonsense Mediated Decay (NMD) independent of the Exon Junction Complex (EJC)"/>
</dbReference>
<dbReference type="Reactome" id="R-HSA-975957">
    <property type="pathway name" value="Nonsense Mediated Decay (NMD) enhanced by the Exon Junction Complex (EJC)"/>
</dbReference>
<dbReference type="SignaLink" id="P62263"/>
<dbReference type="SIGNOR" id="P62263"/>
<dbReference type="BioGRID-ORCS" id="6208">
    <property type="hits" value="808 hits in 1142 CRISPR screens"/>
</dbReference>
<dbReference type="CD-CODE" id="232F8A39">
    <property type="entry name" value="P-body"/>
</dbReference>
<dbReference type="CD-CODE" id="91857CE7">
    <property type="entry name" value="Nucleolus"/>
</dbReference>
<dbReference type="CD-CODE" id="FB4E32DD">
    <property type="entry name" value="Presynaptic clusters and postsynaptic densities"/>
</dbReference>
<dbReference type="ChiTaRS" id="RPS14">
    <property type="organism name" value="human"/>
</dbReference>
<dbReference type="EvolutionaryTrace" id="P62263"/>
<dbReference type="GeneWiki" id="RPS14"/>
<dbReference type="GenomeRNAi" id="6208"/>
<dbReference type="Pharos" id="P62263">
    <property type="development level" value="Tbio"/>
</dbReference>
<dbReference type="PRO" id="PR:P62263"/>
<dbReference type="Proteomes" id="UP000005640">
    <property type="component" value="Chromosome 5"/>
</dbReference>
<dbReference type="RNAct" id="P62263">
    <property type="molecule type" value="protein"/>
</dbReference>
<dbReference type="Bgee" id="ENSG00000164587">
    <property type="expression patterns" value="Expressed in upper leg skin and 214 other cell types or tissues"/>
</dbReference>
<dbReference type="ExpressionAtlas" id="P62263">
    <property type="expression patterns" value="baseline and differential"/>
</dbReference>
<dbReference type="GO" id="GO:0005737">
    <property type="term" value="C:cytoplasm"/>
    <property type="evidence" value="ECO:0000303"/>
    <property type="project" value="ComplexPortal"/>
</dbReference>
<dbReference type="GO" id="GO:0005829">
    <property type="term" value="C:cytosol"/>
    <property type="evidence" value="ECO:0000304"/>
    <property type="project" value="Reactome"/>
</dbReference>
<dbReference type="GO" id="GO:0022626">
    <property type="term" value="C:cytosolic ribosome"/>
    <property type="evidence" value="ECO:0000314"/>
    <property type="project" value="FlyBase"/>
</dbReference>
<dbReference type="GO" id="GO:0022627">
    <property type="term" value="C:cytosolic small ribosomal subunit"/>
    <property type="evidence" value="ECO:0000314"/>
    <property type="project" value="UniProtKB"/>
</dbReference>
<dbReference type="GO" id="GO:0070062">
    <property type="term" value="C:extracellular exosome"/>
    <property type="evidence" value="ECO:0007005"/>
    <property type="project" value="UniProtKB"/>
</dbReference>
<dbReference type="GO" id="GO:0005925">
    <property type="term" value="C:focal adhesion"/>
    <property type="evidence" value="ECO:0007005"/>
    <property type="project" value="UniProtKB"/>
</dbReference>
<dbReference type="GO" id="GO:0016020">
    <property type="term" value="C:membrane"/>
    <property type="evidence" value="ECO:0007005"/>
    <property type="project" value="UniProtKB"/>
</dbReference>
<dbReference type="GO" id="GO:0005730">
    <property type="term" value="C:nucleolus"/>
    <property type="evidence" value="ECO:0000314"/>
    <property type="project" value="UniProtKB"/>
</dbReference>
<dbReference type="GO" id="GO:0005654">
    <property type="term" value="C:nucleoplasm"/>
    <property type="evidence" value="ECO:0000304"/>
    <property type="project" value="Reactome"/>
</dbReference>
<dbReference type="GO" id="GO:0014069">
    <property type="term" value="C:postsynaptic density"/>
    <property type="evidence" value="ECO:0000314"/>
    <property type="project" value="SynGO"/>
</dbReference>
<dbReference type="GO" id="GO:0032040">
    <property type="term" value="C:small-subunit processome"/>
    <property type="evidence" value="ECO:0000314"/>
    <property type="project" value="UniProtKB"/>
</dbReference>
<dbReference type="GO" id="GO:0048027">
    <property type="term" value="F:mRNA 5'-UTR binding"/>
    <property type="evidence" value="ECO:0000314"/>
    <property type="project" value="UniProtKB"/>
</dbReference>
<dbReference type="GO" id="GO:0003723">
    <property type="term" value="F:RNA binding"/>
    <property type="evidence" value="ECO:0007005"/>
    <property type="project" value="UniProtKB"/>
</dbReference>
<dbReference type="GO" id="GO:0003735">
    <property type="term" value="F:structural constituent of ribosome"/>
    <property type="evidence" value="ECO:0000314"/>
    <property type="project" value="FlyBase"/>
</dbReference>
<dbReference type="GO" id="GO:0045182">
    <property type="term" value="F:translation regulator activity"/>
    <property type="evidence" value="ECO:0000315"/>
    <property type="project" value="UniProtKB"/>
</dbReference>
<dbReference type="GO" id="GO:0002181">
    <property type="term" value="P:cytoplasmic translation"/>
    <property type="evidence" value="ECO:0000315"/>
    <property type="project" value="GO_Central"/>
</dbReference>
<dbReference type="GO" id="GO:0030218">
    <property type="term" value="P:erythrocyte differentiation"/>
    <property type="evidence" value="ECO:0000315"/>
    <property type="project" value="UniProtKB"/>
</dbReference>
<dbReference type="GO" id="GO:0030490">
    <property type="term" value="P:maturation of SSU-rRNA"/>
    <property type="evidence" value="ECO:0000250"/>
    <property type="project" value="UniProtKB"/>
</dbReference>
<dbReference type="GO" id="GO:0000122">
    <property type="term" value="P:negative regulation of transcription by RNA polymerase II"/>
    <property type="evidence" value="ECO:0000314"/>
    <property type="project" value="UniProtKB"/>
</dbReference>
<dbReference type="GO" id="GO:0000028">
    <property type="term" value="P:ribosomal small subunit assembly"/>
    <property type="evidence" value="ECO:0000250"/>
    <property type="project" value="UniProtKB"/>
</dbReference>
<dbReference type="GO" id="GO:0042274">
    <property type="term" value="P:ribosomal small subunit biogenesis"/>
    <property type="evidence" value="ECO:0000314"/>
    <property type="project" value="UniProtKB"/>
</dbReference>
<dbReference type="GO" id="GO:0006412">
    <property type="term" value="P:translation"/>
    <property type="evidence" value="ECO:0000315"/>
    <property type="project" value="UniProtKB"/>
</dbReference>
<dbReference type="FunFam" id="3.30.420.80:FF:000018">
    <property type="entry name" value="40S ribosomal protein S14"/>
    <property type="match status" value="1"/>
</dbReference>
<dbReference type="Gene3D" id="3.30.420.80">
    <property type="entry name" value="Ribosomal protein S11"/>
    <property type="match status" value="1"/>
</dbReference>
<dbReference type="HAMAP" id="MF_01310">
    <property type="entry name" value="Ribosomal_uS11"/>
    <property type="match status" value="1"/>
</dbReference>
<dbReference type="InterPro" id="IPR001971">
    <property type="entry name" value="Ribosomal_uS11"/>
</dbReference>
<dbReference type="InterPro" id="IPR018102">
    <property type="entry name" value="Ribosomal_uS11_CS"/>
</dbReference>
<dbReference type="InterPro" id="IPR036967">
    <property type="entry name" value="Ribosomal_uS11_sf"/>
</dbReference>
<dbReference type="NCBIfam" id="NF007176">
    <property type="entry name" value="PRK09607.1"/>
    <property type="match status" value="1"/>
</dbReference>
<dbReference type="PANTHER" id="PTHR11759">
    <property type="entry name" value="40S RIBOSOMAL PROTEIN S14/30S RIBOSOMAL PROTEIN S11"/>
    <property type="match status" value="1"/>
</dbReference>
<dbReference type="Pfam" id="PF00411">
    <property type="entry name" value="Ribosomal_S11"/>
    <property type="match status" value="1"/>
</dbReference>
<dbReference type="PIRSF" id="PIRSF002131">
    <property type="entry name" value="Ribosomal_S11"/>
    <property type="match status" value="1"/>
</dbReference>
<dbReference type="SUPFAM" id="SSF53137">
    <property type="entry name" value="Translational machinery components"/>
    <property type="match status" value="1"/>
</dbReference>
<dbReference type="PROSITE" id="PS00054">
    <property type="entry name" value="RIBOSOMAL_S11"/>
    <property type="match status" value="1"/>
</dbReference>
<sequence length="151" mass="16273">MAPRKGKEKKEEQVISLGPQVAEGENVFGVCHIFASFNDTFVHVTDLSGKETICRVTGGMKVKADRDESSPYAAMLAAQDVAQRCKELGITALHIKLRATGGNRTKTPGPGAQSALRALARSGMKIGRIEDVTPIPSDSTRRKGGRRGRRL</sequence>
<organism>
    <name type="scientific">Homo sapiens</name>
    <name type="common">Human</name>
    <dbReference type="NCBI Taxonomy" id="9606"/>
    <lineage>
        <taxon>Eukaryota</taxon>
        <taxon>Metazoa</taxon>
        <taxon>Chordata</taxon>
        <taxon>Craniata</taxon>
        <taxon>Vertebrata</taxon>
        <taxon>Euteleostomi</taxon>
        <taxon>Mammalia</taxon>
        <taxon>Eutheria</taxon>
        <taxon>Euarchontoglires</taxon>
        <taxon>Primates</taxon>
        <taxon>Haplorrhini</taxon>
        <taxon>Catarrhini</taxon>
        <taxon>Hominidae</taxon>
        <taxon>Homo</taxon>
    </lineage>
</organism>
<protein>
    <recommendedName>
        <fullName evidence="5">Small ribosomal subunit protein uS11</fullName>
    </recommendedName>
    <alternativeName>
        <fullName>40S ribosomal protein S14</fullName>
    </alternativeName>
</protein>
<gene>
    <name evidence="7" type="primary">RPS14</name>
    <name type="ORF">PRO2640</name>
</gene>
<feature type="initiator methionine" description="Removed" evidence="4">
    <location>
        <position position="1"/>
    </location>
</feature>
<feature type="chain" id="PRO_0000123337" description="Small ribosomal subunit protein uS11">
    <location>
        <begin position="2"/>
        <end position="151"/>
    </location>
</feature>
<feature type="region of interest" description="Disordered" evidence="1">
    <location>
        <begin position="131"/>
        <end position="151"/>
    </location>
</feature>
<feature type="compositionally biased region" description="Basic residues" evidence="1">
    <location>
        <begin position="142"/>
        <end position="151"/>
    </location>
</feature>
<feature type="modified residue" description="Phosphoserine" evidence="13">
    <location>
        <position position="16"/>
    </location>
</feature>
<feature type="modified residue" description="Phosphothreonine" evidence="11">
    <location>
        <position position="133"/>
    </location>
</feature>
<feature type="modified residue" description="Phosphoserine" evidence="12">
    <location>
        <position position="139"/>
    </location>
</feature>
<feature type="cross-link" description="Glycyl lysine isopeptide (Lys-Gly) (interchain with G-Cter in SUMO2)" evidence="14">
    <location>
        <position position="61"/>
    </location>
</feature>
<feature type="cross-link" description="Glycyl lysine isopeptide (Lys-Gly) (interchain with G-Cter in SUMO2)" evidence="14">
    <location>
        <position position="63"/>
    </location>
</feature>
<feature type="cross-link" description="Glycyl lysine isopeptide (Lys-Gly) (interchain with G-Cter in SUMO2)" evidence="14">
    <location>
        <position position="106"/>
    </location>
</feature>
<feature type="strand" evidence="17">
    <location>
        <begin position="15"/>
        <end position="18"/>
    </location>
</feature>
<feature type="strand" evidence="16">
    <location>
        <begin position="23"/>
        <end position="25"/>
    </location>
</feature>
<feature type="strand" evidence="18">
    <location>
        <begin position="28"/>
        <end position="35"/>
    </location>
</feature>
<feature type="strand" evidence="18">
    <location>
        <begin position="40"/>
        <end position="45"/>
    </location>
</feature>
<feature type="strand" evidence="18">
    <location>
        <begin position="51"/>
        <end position="57"/>
    </location>
</feature>
<feature type="helix" evidence="18">
    <location>
        <begin position="58"/>
        <end position="61"/>
    </location>
</feature>
<feature type="helix" evidence="18">
    <location>
        <begin position="65"/>
        <end position="69"/>
    </location>
</feature>
<feature type="helix" evidence="18">
    <location>
        <begin position="71"/>
        <end position="87"/>
    </location>
</feature>
<feature type="strand" evidence="18">
    <location>
        <begin position="92"/>
        <end position="98"/>
    </location>
</feature>
<feature type="turn" evidence="15">
    <location>
        <begin position="102"/>
        <end position="104"/>
    </location>
</feature>
<feature type="helix" evidence="18">
    <location>
        <begin position="111"/>
        <end position="121"/>
    </location>
</feature>
<feature type="strand" evidence="18">
    <location>
        <begin position="125"/>
        <end position="131"/>
    </location>
</feature>
<accession>P62263</accession>
<accession>B2R5G5</accession>
<accession>D3DQG5</accession>
<accession>P06366</accession>
<accession>Q5BJI0</accession>
<evidence type="ECO:0000256" key="1">
    <source>
        <dbReference type="SAM" id="MobiDB-lite"/>
    </source>
</evidence>
<evidence type="ECO:0000269" key="2">
    <source>
    </source>
</evidence>
<evidence type="ECO:0000269" key="3">
    <source>
    </source>
</evidence>
<evidence type="ECO:0000269" key="4">
    <source>
    </source>
</evidence>
<evidence type="ECO:0000303" key="5">
    <source>
    </source>
</evidence>
<evidence type="ECO:0000305" key="6"/>
<evidence type="ECO:0000312" key="7">
    <source>
        <dbReference type="HGNC" id="HGNC:10387"/>
    </source>
</evidence>
<evidence type="ECO:0007744" key="8">
    <source>
        <dbReference type="PDB" id="7MQ8"/>
    </source>
</evidence>
<evidence type="ECO:0007744" key="9">
    <source>
        <dbReference type="PDB" id="7MQ9"/>
    </source>
</evidence>
<evidence type="ECO:0007744" key="10">
    <source>
        <dbReference type="PDB" id="7MQA"/>
    </source>
</evidence>
<evidence type="ECO:0007744" key="11">
    <source>
    </source>
</evidence>
<evidence type="ECO:0007744" key="12">
    <source>
    </source>
</evidence>
<evidence type="ECO:0007744" key="13">
    <source>
    </source>
</evidence>
<evidence type="ECO:0007744" key="14">
    <source>
    </source>
</evidence>
<evidence type="ECO:0007829" key="15">
    <source>
        <dbReference type="PDB" id="6YBW"/>
    </source>
</evidence>
<evidence type="ECO:0007829" key="16">
    <source>
        <dbReference type="PDB" id="6ZOJ"/>
    </source>
</evidence>
<evidence type="ECO:0007829" key="17">
    <source>
        <dbReference type="PDB" id="6ZVH"/>
    </source>
</evidence>
<evidence type="ECO:0007829" key="18">
    <source>
        <dbReference type="PDB" id="7R4X"/>
    </source>
</evidence>
<proteinExistence type="evidence at protein level"/>